<keyword id="KW-1015">Disulfide bond</keyword>
<keyword id="KW-0378">Hydrolase</keyword>
<keyword id="KW-1254">Modulation of host virulence by virus</keyword>
<keyword id="KW-0652">Protein synthesis inhibitor</keyword>
<keyword id="KW-0964">Secreted</keyword>
<keyword id="KW-0732">Signal</keyword>
<keyword id="KW-0800">Toxin</keyword>
<keyword id="KW-1255">Viral exotoxin</keyword>
<keyword id="KW-0843">Virulence</keyword>
<gene>
    <name type="primary">stxA</name>
</gene>
<organism>
    <name type="scientific">Bacteriophage H30</name>
    <dbReference type="NCBI Taxonomy" id="12371"/>
    <lineage>
        <taxon>Viruses</taxon>
    </lineage>
</organism>
<sequence>MKIIIFRVLTFFFVIFSVNVVAKEFTLDFSTAKTYVDSLNVIRSAIGTPLQTISSGGTSLLMIDSGTGDNLFAVDVRGIDPEEGRFNNLRLIVERNNLYVTGFVNRTNNVFYRFADFSHVTFPGTTAVTLSGDSSYTTLQRVAGISRTGMQINRHSLTTSYLDLMSHSGTSLTQSVARAMLRFVTVTAEALRFRQIQRGFRTTLDDLSGRSYVMTAEDVDLTLNWGRLSSVLPDYHGQDSVRVGRISFGSINAILGSVALILNCHHHASRVARMASDEFPSMCPADGRVRGITHNKILWDSSTLGAILMRRTISS</sequence>
<organismHost>
    <name type="scientific">Escherichia coli</name>
    <dbReference type="NCBI Taxonomy" id="562"/>
</organismHost>
<protein>
    <recommendedName>
        <fullName>Shiga-like toxin 1 subunit A</fullName>
        <shortName>SLT-1 A subunit</shortName>
        <shortName>SLT-1a</shortName>
        <shortName>SLT-Ia</shortName>
        <ecNumber>3.2.2.22</ecNumber>
    </recommendedName>
    <alternativeName>
        <fullName>Verocytotoxin 1 subunit A</fullName>
    </alternativeName>
    <alternativeName>
        <fullName>Verotoxin 1 subunit A</fullName>
    </alternativeName>
    <alternativeName>
        <fullName>rRNA N-glycosidase 1</fullName>
    </alternativeName>
</protein>
<feature type="signal peptide">
    <location>
        <begin position="1"/>
        <end position="22"/>
    </location>
</feature>
<feature type="chain" id="PRO_0000030790" description="Shiga-like toxin 1 subunit A">
    <location>
        <begin position="23"/>
        <end position="315"/>
    </location>
</feature>
<feature type="region of interest" description="A1" evidence="1">
    <location>
        <begin position="23"/>
        <end position="273"/>
    </location>
</feature>
<feature type="region of interest" description="A2" evidence="1">
    <location>
        <begin position="274"/>
        <end position="315"/>
    </location>
</feature>
<feature type="active site" evidence="1">
    <location>
        <position position="189"/>
    </location>
</feature>
<feature type="site" description="Cleavage; by furin" evidence="1">
    <location>
        <begin position="273"/>
        <end position="274"/>
    </location>
</feature>
<feature type="disulfide bond" evidence="1">
    <location>
        <begin position="264"/>
        <end position="283"/>
    </location>
</feature>
<evidence type="ECO:0000250" key="1"/>
<evidence type="ECO:0000305" key="2"/>
<reference key="1">
    <citation type="journal article" date="1988" name="Gene">
        <title>The primary structure of the operons coding for Shigella dysenteriae toxin and temperature phage H30 shiga-like toxin.</title>
        <authorList>
            <person name="Kozlov Y.V."/>
            <person name="Kabishev A.A."/>
            <person name="Lukyanov E.V."/>
            <person name="Bayev A.A."/>
        </authorList>
    </citation>
    <scope>NUCLEOTIDE SEQUENCE [GENOMIC DNA]</scope>
</reference>
<name>STXA_BPH30</name>
<proteinExistence type="inferred from homology"/>
<dbReference type="EC" id="3.2.2.22"/>
<dbReference type="EMBL" id="M23980">
    <property type="protein sequence ID" value="AAA72732.1"/>
    <property type="molecule type" value="Genomic_DNA"/>
</dbReference>
<dbReference type="SMR" id="P10149"/>
<dbReference type="DIP" id="DIP-6144N"/>
<dbReference type="GO" id="GO:0005576">
    <property type="term" value="C:extracellular region"/>
    <property type="evidence" value="ECO:0007669"/>
    <property type="project" value="UniProtKB-SubCell"/>
</dbReference>
<dbReference type="GO" id="GO:0030598">
    <property type="term" value="F:rRNA N-glycosylase activity"/>
    <property type="evidence" value="ECO:0007669"/>
    <property type="project" value="UniProtKB-EC"/>
</dbReference>
<dbReference type="GO" id="GO:0090729">
    <property type="term" value="F:toxin activity"/>
    <property type="evidence" value="ECO:0007669"/>
    <property type="project" value="UniProtKB-KW"/>
</dbReference>
<dbReference type="GO" id="GO:0017148">
    <property type="term" value="P:negative regulation of translation"/>
    <property type="evidence" value="ECO:0007669"/>
    <property type="project" value="UniProtKB-KW"/>
</dbReference>
<dbReference type="GO" id="GO:0098676">
    <property type="term" value="P:symbiont-mediated modulation of host virulence"/>
    <property type="evidence" value="ECO:0007669"/>
    <property type="project" value="UniProtKB-KW"/>
</dbReference>
<dbReference type="Gene3D" id="3.40.420.10">
    <property type="entry name" value="Ricin (A subunit), domain 1"/>
    <property type="match status" value="1"/>
</dbReference>
<dbReference type="Gene3D" id="4.10.470.10">
    <property type="entry name" value="Ricin (A Subunit), domain 2"/>
    <property type="match status" value="1"/>
</dbReference>
<dbReference type="InterPro" id="IPR036041">
    <property type="entry name" value="Ribosome-inact_prot_sf"/>
</dbReference>
<dbReference type="InterPro" id="IPR001574">
    <property type="entry name" value="Ribosome_inactivat_prot"/>
</dbReference>
<dbReference type="InterPro" id="IPR017988">
    <property type="entry name" value="Ribosome_inactivat_prot_CS"/>
</dbReference>
<dbReference type="InterPro" id="IPR016138">
    <property type="entry name" value="Ribosome_inactivat_prot_sub1"/>
</dbReference>
<dbReference type="InterPro" id="IPR016139">
    <property type="entry name" value="Ribosome_inactivat_prot_sub2"/>
</dbReference>
<dbReference type="InterPro" id="IPR016331">
    <property type="entry name" value="Shiga-like_toxin_subunit_A"/>
</dbReference>
<dbReference type="NCBIfam" id="NF041694">
    <property type="entry name" value="Shig_StxA_1a"/>
    <property type="match status" value="1"/>
</dbReference>
<dbReference type="NCBIfam" id="NF033658">
    <property type="entry name" value="Shiga_Stx1A"/>
    <property type="match status" value="1"/>
</dbReference>
<dbReference type="PANTHER" id="PTHR33453">
    <property type="match status" value="1"/>
</dbReference>
<dbReference type="PANTHER" id="PTHR33453:SF34">
    <property type="entry name" value="RIBOSOME-INACTIVATING PROTEIN"/>
    <property type="match status" value="1"/>
</dbReference>
<dbReference type="Pfam" id="PF00161">
    <property type="entry name" value="RIP"/>
    <property type="match status" value="1"/>
</dbReference>
<dbReference type="PIRSF" id="PIRSF001924">
    <property type="entry name" value="Shigella_toxin_subunit_A"/>
    <property type="match status" value="1"/>
</dbReference>
<dbReference type="SUPFAM" id="SSF56371">
    <property type="entry name" value="Ribosome inactivating proteins (RIP)"/>
    <property type="match status" value="1"/>
</dbReference>
<dbReference type="PROSITE" id="PS00275">
    <property type="entry name" value="SHIGA_RICIN"/>
    <property type="match status" value="1"/>
</dbReference>
<comment type="function">
    <text>The A subunit is responsible for inhibiting protein synthesis through the catalytic inactivation of 60S ribosomal subunits. After endocytosis, the A subunit is cleaved by furin in two fragments, A1 and A2: A1 is the catalytically active fragment, and A2 is essential for holotoxin assembly with the B subunits.</text>
</comment>
<comment type="catalytic activity">
    <reaction>
        <text>Endohydrolysis of the N-glycosidic bond at one specific adenosine on the 28S rRNA.</text>
        <dbReference type="EC" id="3.2.2.22"/>
    </reaction>
</comment>
<comment type="subunit">
    <text>Shiga-like toxin contains a single subunit A and five copies of subunit B.</text>
</comment>
<comment type="subcellular location">
    <subcellularLocation>
        <location>Secreted</location>
    </subcellularLocation>
</comment>
<comment type="similarity">
    <text evidence="2">Belongs to the ribosome-inactivating protein family.</text>
</comment>
<accession>P10149</accession>